<organismHost>
    <name type="scientific">Homo sapiens</name>
    <name type="common">Human</name>
    <dbReference type="NCBI Taxonomy" id="9606"/>
</organismHost>
<proteinExistence type="evidence at transcript level"/>
<sequence>MLHVVPLEWTVEEVVPYLERLAVWLRASVLVAFQLTATVALSVLSWWLMPPPVAELCERGRDDDPPPLSHLSLVVPVGCLFLLLRGPSIDRCPRKLPLLLAYCLPHALAFLTLLMCQPSPQAFVGAALLALAVDLSCLGASLLGCDPGASLRRLWLPSVLSLLCATALGLWLLRAAAPFFLGLHATTLLTVTLMLIHDLSLITCQSSFPESFQPSLRLYVENVALFIGMYHLLRLWLWSP</sequence>
<organism>
    <name type="scientific">Human cytomegalovirus (strain AD169)</name>
    <name type="common">HHV-5</name>
    <name type="synonym">Human herpesvirus 5</name>
    <dbReference type="NCBI Taxonomy" id="10360"/>
    <lineage>
        <taxon>Viruses</taxon>
        <taxon>Duplodnaviria</taxon>
        <taxon>Heunggongvirae</taxon>
        <taxon>Peploviricota</taxon>
        <taxon>Herviviricetes</taxon>
        <taxon>Herpesvirales</taxon>
        <taxon>Orthoherpesviridae</taxon>
        <taxon>Betaherpesvirinae</taxon>
        <taxon>Cytomegalovirus</taxon>
        <taxon>Cytomegalovirus humanbeta5</taxon>
        <taxon>Human cytomegalovirus</taxon>
    </lineage>
</organism>
<accession>P69336</accession>
<accession>P09725</accession>
<accession>Q7M6I1</accession>
<dbReference type="EMBL" id="X04650">
    <property type="protein sequence ID" value="CAB37111.1"/>
    <property type="molecule type" value="Genomic_DNA"/>
</dbReference>
<dbReference type="EMBL" id="X17403">
    <property type="protein sequence ID" value="CAA35286.1"/>
    <property type="molecule type" value="Genomic_DNA"/>
</dbReference>
<dbReference type="EMBL" id="BK000394">
    <property type="protein sequence ID" value="DAA00207.1"/>
    <property type="molecule type" value="Genomic_DNA"/>
</dbReference>
<dbReference type="PIR" id="C27231">
    <property type="entry name" value="QQBEG3"/>
</dbReference>
<dbReference type="Proteomes" id="UP000008991">
    <property type="component" value="Segment"/>
</dbReference>
<dbReference type="Proteomes" id="UP000008992">
    <property type="component" value="Segment"/>
</dbReference>
<dbReference type="GO" id="GO:0016020">
    <property type="term" value="C:membrane"/>
    <property type="evidence" value="ECO:0007669"/>
    <property type="project" value="UniProtKB-SubCell"/>
</dbReference>
<feature type="chain" id="PRO_0000115279" description="Transmembrane protein HWLF4">
    <location>
        <begin position="1"/>
        <end position="240"/>
    </location>
</feature>
<feature type="transmembrane region" description="Helical" evidence="1">
    <location>
        <begin position="29"/>
        <end position="49"/>
    </location>
</feature>
<feature type="transmembrane region" description="Helical" evidence="1">
    <location>
        <begin position="64"/>
        <end position="84"/>
    </location>
</feature>
<feature type="transmembrane region" description="Helical" evidence="1">
    <location>
        <begin position="96"/>
        <end position="116"/>
    </location>
</feature>
<feature type="transmembrane region" description="Helical" evidence="1">
    <location>
        <begin position="123"/>
        <end position="143"/>
    </location>
</feature>
<feature type="transmembrane region" description="Helical" evidence="1">
    <location>
        <begin position="154"/>
        <end position="174"/>
    </location>
</feature>
<feature type="transmembrane region" description="Helical" evidence="1">
    <location>
        <begin position="176"/>
        <end position="196"/>
    </location>
</feature>
<feature type="transmembrane region" description="Helical" evidence="1">
    <location>
        <begin position="218"/>
        <end position="238"/>
    </location>
</feature>
<reference key="1">
    <citation type="journal article" date="1986" name="J. Mol. Biol.">
        <title>Sequence of the short unique region, short repeats, and part of the long repeats of human cytomegalovirus.</title>
        <authorList>
            <person name="Weston K.M."/>
            <person name="Barrell B.G."/>
        </authorList>
    </citation>
    <scope>NUCLEOTIDE SEQUENCE [GENOMIC DNA]</scope>
</reference>
<reference key="2">
    <citation type="journal article" date="1990" name="Curr. Top. Microbiol. Immunol.">
        <title>Analysis of the protein-coding content of the sequence of human cytomegalovirus strain AD169.</title>
        <authorList>
            <person name="Chee M.S."/>
            <person name="Bankier A.T."/>
            <person name="Beck S."/>
            <person name="Bohni R."/>
            <person name="Brown C.M."/>
            <person name="Cerny R."/>
            <person name="Horsnell T."/>
            <person name="Hutchison C.A. III"/>
            <person name="Kouzarides T."/>
            <person name="Martignetti J.A."/>
            <person name="Preddie E."/>
            <person name="Satchwell S.C."/>
            <person name="Tomlinson P."/>
            <person name="Weston K.M."/>
            <person name="Barrell B.G."/>
        </authorList>
    </citation>
    <scope>NUCLEOTIDE SEQUENCE [LARGE SCALE GENOMIC DNA]</scope>
</reference>
<reference key="3">
    <citation type="journal article" date="2003" name="J. Gen. Virol.">
        <title>The human cytomegalovirus genome revisited: comparison with the chimpanzee cytomegalovirus genome.</title>
        <authorList>
            <person name="Davison A.J."/>
            <person name="Dolan A."/>
            <person name="Akter P."/>
            <person name="Addison C."/>
            <person name="Dargan D.J."/>
            <person name="Alcendor D.J."/>
            <person name="McGeoch D.J."/>
            <person name="Hayward G.S."/>
        </authorList>
    </citation>
    <scope>GENOME REANNOTATION</scope>
</reference>
<reference key="4">
    <citation type="journal article" date="2003" name="J. Gen. Virol.">
        <authorList>
            <person name="Davison A.J."/>
            <person name="Dolan A."/>
            <person name="Akter P."/>
            <person name="Addison C."/>
            <person name="Dargan D.J."/>
            <person name="Alcendor D.J."/>
            <person name="McGeoch D.J."/>
            <person name="Hayward G.S."/>
        </authorList>
    </citation>
    <scope>ERRATUM OF PUBMED:12533697</scope>
</reference>
<protein>
    <recommendedName>
        <fullName>Transmembrane protein HWLF4</fullName>
    </recommendedName>
</protein>
<evidence type="ECO:0000255" key="1"/>
<evidence type="ECO:0000305" key="2"/>
<gene>
    <name type="primary">US19</name>
</gene>
<keyword id="KW-0426">Late protein</keyword>
<keyword id="KW-0472">Membrane</keyword>
<keyword id="KW-1185">Reference proteome</keyword>
<keyword id="KW-0812">Transmembrane</keyword>
<keyword id="KW-1133">Transmembrane helix</keyword>
<comment type="subcellular location">
    <subcellularLocation>
        <location evidence="2">Membrane</location>
        <topology evidence="2">Multi-pass membrane protein</topology>
    </subcellularLocation>
</comment>
<comment type="developmental stage">
    <text>Expressed 34 hours post-infection.</text>
</comment>
<comment type="similarity">
    <text evidence="2">Belongs to the cytomegalovirus US12 family.</text>
</comment>
<name>US19_HCMVA</name>